<protein>
    <recommendedName>
        <fullName>Mediator of RNA polymerase II transcription subunit 8</fullName>
    </recommendedName>
    <alternativeName>
        <fullName>Mediator complex subunit 8</fullName>
    </alternativeName>
</protein>
<reference key="1">
    <citation type="submission" date="2004-02" db="EMBL/GenBank/DDBJ databases">
        <authorList>
            <consortium name="NIH - Zebrafish Gene Collection (ZGC) project"/>
        </authorList>
    </citation>
    <scope>NUCLEOTIDE SEQUENCE [LARGE SCALE MRNA]</scope>
    <source>
        <tissue>Embryo</tissue>
    </source>
</reference>
<evidence type="ECO:0000250" key="1"/>
<evidence type="ECO:0000255" key="2"/>
<evidence type="ECO:0000256" key="3">
    <source>
        <dbReference type="SAM" id="MobiDB-lite"/>
    </source>
</evidence>
<evidence type="ECO:0000305" key="4"/>
<accession>Q6NYT1</accession>
<sequence length="267" mass="29402">MQQREEKQLEAFLESLVARVAHLKGSLQSFIYKLENEYDRLTWPSVLDNFALISGQLNTINKLLRNEKTPSYKSQVIIPLLLSPDRDEELAKLTEHRVPVFSHEIVPDHLRTKPDPEVEEQEKHLSAEAARIGPEVAQKQIQALNKLCSNLLEKLNNPREDRDSETSALRQNKPSFNPADTNALVAAVGFGKGLSKCRPPGPVAPGHPGQPMMQTGPTLQQVTIAGASGHQAGMSGPVAPQQPGQPGKIPSNIKTNIKSASMHPYNR</sequence>
<proteinExistence type="evidence at transcript level"/>
<comment type="function">
    <text evidence="1">Component of the Mediator complex, a coactivator involved in the regulated transcription of nearly all RNA polymerase II-dependent genes. Mediator functions as a bridge to convey information from gene-specific regulatory proteins to the basal RNA polymerase II transcription machinery. Mediator is recruited to promoters by direct interactions with regulatory proteins and serves as a scaffold for the assembly of a functional preinitiation complex with RNA polymerase II and the general transcription factors. May play a role as a target recruitment subunit in E3 ubiquitin-protein ligase complexes and thus in ubiquitination and subsequent proteasomal degradation of target proteins (By similarity).</text>
</comment>
<comment type="pathway">
    <text>Protein modification; protein ubiquitination.</text>
</comment>
<comment type="subunit">
    <text evidence="1">Component of the Mediator complex. May be part of a multisubunit E3 ubiquitin-protein ligase complex (By similarity).</text>
</comment>
<comment type="subcellular location">
    <subcellularLocation>
        <location evidence="4">Nucleus</location>
    </subcellularLocation>
</comment>
<comment type="similarity">
    <text evidence="4">Belongs to the Mediator complex subunit 8 family.</text>
</comment>
<feature type="chain" id="PRO_0000304525" description="Mediator of RNA polymerase II transcription subunit 8">
    <location>
        <begin position="1"/>
        <end position="267"/>
    </location>
</feature>
<feature type="region of interest" description="Disordered" evidence="3">
    <location>
        <begin position="156"/>
        <end position="180"/>
    </location>
</feature>
<feature type="region of interest" description="Disordered" evidence="3">
    <location>
        <begin position="227"/>
        <end position="267"/>
    </location>
</feature>
<feature type="coiled-coil region" evidence="2">
    <location>
        <begin position="2"/>
        <end position="27"/>
    </location>
</feature>
<feature type="coiled-coil region" evidence="2">
    <location>
        <begin position="118"/>
        <end position="163"/>
    </location>
</feature>
<feature type="compositionally biased region" description="Basic and acidic residues" evidence="3">
    <location>
        <begin position="156"/>
        <end position="165"/>
    </location>
</feature>
<feature type="compositionally biased region" description="Polar residues" evidence="3">
    <location>
        <begin position="166"/>
        <end position="180"/>
    </location>
</feature>
<feature type="compositionally biased region" description="Low complexity" evidence="3">
    <location>
        <begin position="236"/>
        <end position="247"/>
    </location>
</feature>
<organism>
    <name type="scientific">Danio rerio</name>
    <name type="common">Zebrafish</name>
    <name type="synonym">Brachydanio rerio</name>
    <dbReference type="NCBI Taxonomy" id="7955"/>
    <lineage>
        <taxon>Eukaryota</taxon>
        <taxon>Metazoa</taxon>
        <taxon>Chordata</taxon>
        <taxon>Craniata</taxon>
        <taxon>Vertebrata</taxon>
        <taxon>Euteleostomi</taxon>
        <taxon>Actinopterygii</taxon>
        <taxon>Neopterygii</taxon>
        <taxon>Teleostei</taxon>
        <taxon>Ostariophysi</taxon>
        <taxon>Cypriniformes</taxon>
        <taxon>Danionidae</taxon>
        <taxon>Danioninae</taxon>
        <taxon>Danio</taxon>
    </lineage>
</organism>
<keyword id="KW-0010">Activator</keyword>
<keyword id="KW-0175">Coiled coil</keyword>
<keyword id="KW-0539">Nucleus</keyword>
<keyword id="KW-1185">Reference proteome</keyword>
<keyword id="KW-0804">Transcription</keyword>
<keyword id="KW-0805">Transcription regulation</keyword>
<keyword id="KW-0833">Ubl conjugation pathway</keyword>
<name>MED8_DANRE</name>
<gene>
    <name type="primary">med8</name>
    <name type="ORF">zgc:76877</name>
</gene>
<dbReference type="EMBL" id="BC066472">
    <property type="protein sequence ID" value="AAH66472.1"/>
    <property type="molecule type" value="mRNA"/>
</dbReference>
<dbReference type="RefSeq" id="NP_996966.1">
    <property type="nucleotide sequence ID" value="NM_207083.1"/>
</dbReference>
<dbReference type="SMR" id="Q6NYT1"/>
<dbReference type="FunCoup" id="Q6NYT1">
    <property type="interactions" value="1864"/>
</dbReference>
<dbReference type="STRING" id="7955.ENSDARP00000149277"/>
<dbReference type="PaxDb" id="7955-ENSDARP00000027433"/>
<dbReference type="GeneID" id="404615"/>
<dbReference type="KEGG" id="dre:404615"/>
<dbReference type="AGR" id="ZFIN:ZDB-GENE-040426-2091"/>
<dbReference type="CTD" id="112950"/>
<dbReference type="ZFIN" id="ZDB-GENE-040426-2091">
    <property type="gene designation" value="med8"/>
</dbReference>
<dbReference type="eggNOG" id="KOG3583">
    <property type="taxonomic scope" value="Eukaryota"/>
</dbReference>
<dbReference type="InParanoid" id="Q6NYT1"/>
<dbReference type="OrthoDB" id="150687at2759"/>
<dbReference type="PhylomeDB" id="Q6NYT1"/>
<dbReference type="UniPathway" id="UPA00143"/>
<dbReference type="PRO" id="PR:Q6NYT1"/>
<dbReference type="Proteomes" id="UP000000437">
    <property type="component" value="Chromosome 6"/>
</dbReference>
<dbReference type="GO" id="GO:0070847">
    <property type="term" value="C:core mediator complex"/>
    <property type="evidence" value="ECO:0000318"/>
    <property type="project" value="GO_Central"/>
</dbReference>
<dbReference type="GO" id="GO:0016592">
    <property type="term" value="C:mediator complex"/>
    <property type="evidence" value="ECO:0000318"/>
    <property type="project" value="GO_Central"/>
</dbReference>
<dbReference type="GO" id="GO:0000978">
    <property type="term" value="F:RNA polymerase II cis-regulatory region sequence-specific DNA binding"/>
    <property type="evidence" value="ECO:0000318"/>
    <property type="project" value="GO_Central"/>
</dbReference>
<dbReference type="GO" id="GO:0003712">
    <property type="term" value="F:transcription coregulator activity"/>
    <property type="evidence" value="ECO:0000318"/>
    <property type="project" value="GO_Central"/>
</dbReference>
<dbReference type="GO" id="GO:0016567">
    <property type="term" value="P:protein ubiquitination"/>
    <property type="evidence" value="ECO:0007669"/>
    <property type="project" value="UniProtKB-UniPathway"/>
</dbReference>
<dbReference type="GO" id="GO:0006357">
    <property type="term" value="P:regulation of transcription by RNA polymerase II"/>
    <property type="evidence" value="ECO:0000318"/>
    <property type="project" value="GO_Central"/>
</dbReference>
<dbReference type="FunFam" id="1.20.58.1710:FF:000001">
    <property type="entry name" value="Mediator of RNA polymerase II transcription subunit 8"/>
    <property type="match status" value="1"/>
</dbReference>
<dbReference type="Gene3D" id="1.20.58.1710">
    <property type="match status" value="1"/>
</dbReference>
<dbReference type="InterPro" id="IPR019364">
    <property type="entry name" value="Mediatior_Med8_fun/met"/>
</dbReference>
<dbReference type="PANTHER" id="PTHR13074">
    <property type="entry name" value="MEDIATOR OF RNA POLYMERASE II TRANSCRIPTION SUBUNIT 8"/>
    <property type="match status" value="1"/>
</dbReference>
<dbReference type="PANTHER" id="PTHR13074:SF9">
    <property type="entry name" value="MEDIATOR OF RNA POLYMERASE II TRANSCRIPTION SUBUNIT 8"/>
    <property type="match status" value="1"/>
</dbReference>
<dbReference type="Pfam" id="PF10232">
    <property type="entry name" value="Med8"/>
    <property type="match status" value="1"/>
</dbReference>